<protein>
    <recommendedName>
        <fullName evidence="4">Cytochrome P450 monooxygenase 253</fullName>
        <ecNumber evidence="6">1.-.-.-</ecNumber>
    </recommendedName>
</protein>
<accession>F2ZAF9</accession>
<comment type="function">
    <text evidence="1">Cytochrome P450 monooxygenase that is able to use delta(6)-protoilludene as a substrate to produce delta(6)-protoilludene-8-ol.</text>
</comment>
<comment type="cofactor">
    <cofactor evidence="2">
        <name>heme</name>
        <dbReference type="ChEBI" id="CHEBI:30413"/>
    </cofactor>
</comment>
<comment type="pathway">
    <text evidence="5">Secondary metabolite biosynthesis.</text>
</comment>
<comment type="subcellular location">
    <subcellularLocation>
        <location evidence="3">Membrane</location>
        <topology evidence="3">Multi-pass membrane protein</topology>
    </subcellularLocation>
</comment>
<comment type="similarity">
    <text evidence="5">Belongs to the cytochrome P450 family.</text>
</comment>
<name>CY253_POSPM</name>
<keyword id="KW-0349">Heme</keyword>
<keyword id="KW-0408">Iron</keyword>
<keyword id="KW-0472">Membrane</keyword>
<keyword id="KW-0479">Metal-binding</keyword>
<keyword id="KW-0503">Monooxygenase</keyword>
<keyword id="KW-0560">Oxidoreductase</keyword>
<keyword id="KW-0812">Transmembrane</keyword>
<keyword id="KW-1133">Transmembrane helix</keyword>
<organism>
    <name type="scientific">Postia placenta (strain ATCC 44394 / Madison 698-R)</name>
    <name type="common">Brown rot fungus</name>
    <name type="synonym">Poria monticola</name>
    <dbReference type="NCBI Taxonomy" id="561896"/>
    <lineage>
        <taxon>Eukaryota</taxon>
        <taxon>Fungi</taxon>
        <taxon>Dikarya</taxon>
        <taxon>Basidiomycota</taxon>
        <taxon>Agaricomycotina</taxon>
        <taxon>Agaricomycetes</taxon>
        <taxon>Polyporales</taxon>
        <taxon>Adustoporiaceae</taxon>
        <taxon>Rhodonia</taxon>
    </lineage>
</organism>
<dbReference type="EC" id="1.-.-.-" evidence="6"/>
<dbReference type="EMBL" id="AB623255">
    <property type="protein sequence ID" value="BAK20191.1"/>
    <property type="molecule type" value="mRNA"/>
</dbReference>
<dbReference type="SMR" id="F2ZAF9"/>
<dbReference type="GO" id="GO:0016020">
    <property type="term" value="C:membrane"/>
    <property type="evidence" value="ECO:0007669"/>
    <property type="project" value="UniProtKB-SubCell"/>
</dbReference>
<dbReference type="GO" id="GO:0020037">
    <property type="term" value="F:heme binding"/>
    <property type="evidence" value="ECO:0007669"/>
    <property type="project" value="InterPro"/>
</dbReference>
<dbReference type="GO" id="GO:0005506">
    <property type="term" value="F:iron ion binding"/>
    <property type="evidence" value="ECO:0007669"/>
    <property type="project" value="InterPro"/>
</dbReference>
<dbReference type="GO" id="GO:0004497">
    <property type="term" value="F:monooxygenase activity"/>
    <property type="evidence" value="ECO:0007669"/>
    <property type="project" value="UniProtKB-KW"/>
</dbReference>
<dbReference type="GO" id="GO:0016705">
    <property type="term" value="F:oxidoreductase activity, acting on paired donors, with incorporation or reduction of molecular oxygen"/>
    <property type="evidence" value="ECO:0007669"/>
    <property type="project" value="InterPro"/>
</dbReference>
<dbReference type="CDD" id="cd11065">
    <property type="entry name" value="CYP64-like"/>
    <property type="match status" value="1"/>
</dbReference>
<dbReference type="Gene3D" id="1.10.630.10">
    <property type="entry name" value="Cytochrome P450"/>
    <property type="match status" value="1"/>
</dbReference>
<dbReference type="InterPro" id="IPR001128">
    <property type="entry name" value="Cyt_P450"/>
</dbReference>
<dbReference type="InterPro" id="IPR002401">
    <property type="entry name" value="Cyt_P450_E_grp-I"/>
</dbReference>
<dbReference type="InterPro" id="IPR036396">
    <property type="entry name" value="Cyt_P450_sf"/>
</dbReference>
<dbReference type="InterPro" id="IPR050364">
    <property type="entry name" value="Cytochrome_P450_fung"/>
</dbReference>
<dbReference type="PANTHER" id="PTHR46300:SF2">
    <property type="entry name" value="CYTOCHROME P450 MONOOXYGENASE ALNH-RELATED"/>
    <property type="match status" value="1"/>
</dbReference>
<dbReference type="PANTHER" id="PTHR46300">
    <property type="entry name" value="P450, PUTATIVE (EUROFUNG)-RELATED-RELATED"/>
    <property type="match status" value="1"/>
</dbReference>
<dbReference type="Pfam" id="PF00067">
    <property type="entry name" value="p450"/>
    <property type="match status" value="1"/>
</dbReference>
<dbReference type="PRINTS" id="PR00463">
    <property type="entry name" value="EP450I"/>
</dbReference>
<dbReference type="PRINTS" id="PR00385">
    <property type="entry name" value="P450"/>
</dbReference>
<dbReference type="SUPFAM" id="SSF48264">
    <property type="entry name" value="Cytochrome P450"/>
    <property type="match status" value="1"/>
</dbReference>
<sequence length="526" mass="58881">MPASFLASLRAWIASSTIGQRILLALALGLLLITARVISKSKGTMPPGPRGLPLLGNIFQLPKLPWYRFTEWKEEFGPIFSLNFAGTPVVVLNSHEVVGDLLERKSTIYSDRPRFIMAGEILTGGMLIVFTGYGKVWRKLRRAGQEGLNVRASEKYQPLQESEARLLTTNMLREPAEWDAHLQRAAASSIASAVYAWPPLTKSDDGLVHRIDELMRRLVMAGLPGRYLVEIFPIMKHLPTWMAKWKREGLEWHRRDTEMFEGFYDNVARFMASGKYKPSLTAGLIERQEKNGLSKKEVSWLAGTMIGAGAETTAASLSVFMLAMTLYPDVMRKAQAEIDALVGRERMPTFADRPHLPYVCALVKEVLRWRPVGPVGVPRRTSEDDWYKGYFIPKGTLVIANVWAMNRDPAIYPDYDEFRPDRFLDASGNEIDIAGTHGQGHVTYGFGRRICIGMHVANQALFIDIAALLWAFNIEAPTGPDGTPILPSRTDFVDEGLVFRPAAFRCKVTPRIDDVATMLATLEKNA</sequence>
<reference key="1">
    <citation type="journal article" date="2012" name="Arch. Microbiol.">
        <title>Molecular identification and functional characterization of cytochrome P450 monooxygenases from the brown-rot basidiomycete Postia placenta.</title>
        <authorList>
            <person name="Ide M."/>
            <person name="Ichinose H."/>
            <person name="Wariishi H."/>
        </authorList>
    </citation>
    <scope>NUCLEOTIDE SEQUENCE [MRNA]</scope>
    <scope>IDENTIFICATION</scope>
    <source>
        <strain>ATCC 44394 / Madison 698-R</strain>
    </source>
</reference>
<feature type="chain" id="PRO_0000451351" description="Cytochrome P450 monooxygenase 253">
    <location>
        <begin position="1"/>
        <end position="526"/>
    </location>
</feature>
<feature type="transmembrane region" description="Helical" evidence="3">
    <location>
        <begin position="13"/>
        <end position="33"/>
    </location>
</feature>
<feature type="transmembrane region" description="Helical" evidence="3">
    <location>
        <begin position="115"/>
        <end position="135"/>
    </location>
</feature>
<feature type="transmembrane region" description="Helical" evidence="3">
    <location>
        <begin position="306"/>
        <end position="326"/>
    </location>
</feature>
<feature type="binding site" description="axial binding residue" evidence="2">
    <location>
        <position position="451"/>
    </location>
    <ligand>
        <name>heme</name>
        <dbReference type="ChEBI" id="CHEBI:30413"/>
    </ligand>
    <ligandPart>
        <name>Fe</name>
        <dbReference type="ChEBI" id="CHEBI:18248"/>
    </ligandPart>
</feature>
<evidence type="ECO:0000250" key="1">
    <source>
        <dbReference type="UniProtKB" id="F1SY62"/>
    </source>
</evidence>
<evidence type="ECO:0000250" key="2">
    <source>
        <dbReference type="UniProtKB" id="P04798"/>
    </source>
</evidence>
<evidence type="ECO:0000255" key="3"/>
<evidence type="ECO:0000303" key="4">
    <source>
    </source>
</evidence>
<evidence type="ECO:0000305" key="5"/>
<evidence type="ECO:0000305" key="6">
    <source>
    </source>
</evidence>
<gene>
    <name evidence="4" type="primary">CYP253</name>
    <name evidence="4" type="synonym">CYP5344B1v2</name>
</gene>
<proteinExistence type="evidence at transcript level"/>